<keyword id="KW-0067">ATP-binding</keyword>
<keyword id="KW-0418">Kinase</keyword>
<keyword id="KW-0423">Lactose metabolism</keyword>
<keyword id="KW-0547">Nucleotide-binding</keyword>
<keyword id="KW-0614">Plasmid</keyword>
<keyword id="KW-0808">Transferase</keyword>
<sequence>MILTVTLNPSVDISYPLETLKIDTVNRVKDVSKTAGGKGLNVTRVLYESGDKVTATGFLGGKIGEFIESELEQSPVSPAFYKISGNTRNCIAILHEGNQTEILEQGPTISHEEAEGFLDHYSNLIKQSEVVTISGSLPSGLPNDYYEKLIQLASDEGVAVVLDCSGAPLETVLKSSAKPTAIKPNNEELSQLLGKEVTKDIEELKDVLKESLFSGIEWIVVSLGRNGAFAKHGDVFYKVDIPDIPVVNPVGSGDSTVAGIASALNSKKSDADLLKHAMTLGMLNAQETMTGHVNMTNYETLNSQIGVKEV</sequence>
<dbReference type="EC" id="2.7.1.144" evidence="1"/>
<dbReference type="EMBL" id="M60447">
    <property type="protein sequence ID" value="AAA25179.1"/>
    <property type="molecule type" value="Genomic_DNA"/>
</dbReference>
<dbReference type="EMBL" id="M65190">
    <property type="protein sequence ID" value="AAA25170.1"/>
    <property type="molecule type" value="Genomic_DNA"/>
</dbReference>
<dbReference type="PIR" id="C39778">
    <property type="entry name" value="C39778"/>
</dbReference>
<dbReference type="RefSeq" id="WP_002290553.1">
    <property type="nucleotide sequence ID" value="NZ_WUBD01000035.1"/>
</dbReference>
<dbReference type="RefSeq" id="YP_004761518.1">
    <property type="nucleotide sequence ID" value="NC_015862.1"/>
</dbReference>
<dbReference type="RefSeq" id="YP_005863084.1">
    <property type="nucleotide sequence ID" value="NC_017478.1"/>
</dbReference>
<dbReference type="SMR" id="P23391"/>
<dbReference type="GeneID" id="93937319"/>
<dbReference type="BRENDA" id="2.7.1.144">
    <property type="organism ID" value="2864"/>
</dbReference>
<dbReference type="UniPathway" id="UPA00704">
    <property type="reaction ID" value="UER00715"/>
</dbReference>
<dbReference type="PRO" id="PR:P23391"/>
<dbReference type="GO" id="GO:0005829">
    <property type="term" value="C:cytosol"/>
    <property type="evidence" value="ECO:0007669"/>
    <property type="project" value="TreeGrafter"/>
</dbReference>
<dbReference type="GO" id="GO:0005524">
    <property type="term" value="F:ATP binding"/>
    <property type="evidence" value="ECO:0007669"/>
    <property type="project" value="UniProtKB-KW"/>
</dbReference>
<dbReference type="GO" id="GO:0008443">
    <property type="term" value="F:phosphofructokinase activity"/>
    <property type="evidence" value="ECO:0007669"/>
    <property type="project" value="TreeGrafter"/>
</dbReference>
<dbReference type="GO" id="GO:0009024">
    <property type="term" value="F:tagatose-6-phosphate kinase activity"/>
    <property type="evidence" value="ECO:0007669"/>
    <property type="project" value="UniProtKB-UniRule"/>
</dbReference>
<dbReference type="GO" id="GO:2001059">
    <property type="term" value="P:D-tagatose 6-phosphate catabolic process"/>
    <property type="evidence" value="ECO:0007669"/>
    <property type="project" value="UniProtKB-UniRule"/>
</dbReference>
<dbReference type="GO" id="GO:0019512">
    <property type="term" value="P:lactose catabolic process via tagatose-6-phosphate"/>
    <property type="evidence" value="ECO:0007669"/>
    <property type="project" value="InterPro"/>
</dbReference>
<dbReference type="CDD" id="cd01164">
    <property type="entry name" value="FruK_PfkB_like"/>
    <property type="match status" value="1"/>
</dbReference>
<dbReference type="FunFam" id="3.40.1190.20:FF:000001">
    <property type="entry name" value="Phosphofructokinase"/>
    <property type="match status" value="1"/>
</dbReference>
<dbReference type="Gene3D" id="3.40.1190.20">
    <property type="match status" value="1"/>
</dbReference>
<dbReference type="HAMAP" id="MF_01557">
    <property type="entry name" value="LacC"/>
    <property type="match status" value="1"/>
</dbReference>
<dbReference type="InterPro" id="IPR002173">
    <property type="entry name" value="Carboh/pur_kinase_PfkB_CS"/>
</dbReference>
<dbReference type="InterPro" id="IPR005926">
    <property type="entry name" value="LacC"/>
</dbReference>
<dbReference type="InterPro" id="IPR011611">
    <property type="entry name" value="PfkB_dom"/>
</dbReference>
<dbReference type="InterPro" id="IPR029056">
    <property type="entry name" value="Ribokinase-like"/>
</dbReference>
<dbReference type="InterPro" id="IPR017583">
    <property type="entry name" value="Tagatose/fructose_Pkinase"/>
</dbReference>
<dbReference type="NCBIfam" id="TIGR03168">
    <property type="entry name" value="1-PFK"/>
    <property type="match status" value="1"/>
</dbReference>
<dbReference type="NCBIfam" id="TIGR01231">
    <property type="entry name" value="lacC"/>
    <property type="match status" value="1"/>
</dbReference>
<dbReference type="NCBIfam" id="NF010033">
    <property type="entry name" value="PRK13508.1"/>
    <property type="match status" value="1"/>
</dbReference>
<dbReference type="PANTHER" id="PTHR46566:SF5">
    <property type="entry name" value="1-PHOSPHOFRUCTOKINASE"/>
    <property type="match status" value="1"/>
</dbReference>
<dbReference type="PANTHER" id="PTHR46566">
    <property type="entry name" value="1-PHOSPHOFRUCTOKINASE-RELATED"/>
    <property type="match status" value="1"/>
</dbReference>
<dbReference type="Pfam" id="PF00294">
    <property type="entry name" value="PfkB"/>
    <property type="match status" value="1"/>
</dbReference>
<dbReference type="PIRSF" id="PIRSF000535">
    <property type="entry name" value="1PFK/6PFK/LacC"/>
    <property type="match status" value="1"/>
</dbReference>
<dbReference type="SUPFAM" id="SSF53613">
    <property type="entry name" value="Ribokinase-like"/>
    <property type="match status" value="1"/>
</dbReference>
<dbReference type="PROSITE" id="PS00583">
    <property type="entry name" value="PFKB_KINASES_1"/>
    <property type="match status" value="1"/>
</dbReference>
<dbReference type="PROSITE" id="PS00584">
    <property type="entry name" value="PFKB_KINASES_2"/>
    <property type="match status" value="1"/>
</dbReference>
<comment type="catalytic activity">
    <reaction evidence="1">
        <text>D-tagatofuranose 6-phosphate + ATP = D-tagatofuranose 1,6-bisphosphate + ADP + H(+)</text>
        <dbReference type="Rhea" id="RHEA:12420"/>
        <dbReference type="ChEBI" id="CHEBI:15378"/>
        <dbReference type="ChEBI" id="CHEBI:30616"/>
        <dbReference type="ChEBI" id="CHEBI:58694"/>
        <dbReference type="ChEBI" id="CHEBI:58695"/>
        <dbReference type="ChEBI" id="CHEBI:456216"/>
        <dbReference type="EC" id="2.7.1.144"/>
    </reaction>
</comment>
<comment type="pathway">
    <text evidence="1">Carbohydrate metabolism; D-tagatose 6-phosphate degradation; D-glyceraldehyde 3-phosphate and glycerone phosphate from D-tagatose 6-phosphate: step 1/2.</text>
</comment>
<comment type="induction">
    <text evidence="2">By lactose. The operon consists of lacABCDFEGX.</text>
</comment>
<comment type="miscellaneous">
    <text>This gene was sequenced from pMG820, a laboratory-derived deletion of the naturally occurring plasmid pLP712.</text>
</comment>
<comment type="similarity">
    <text evidence="1">Belongs to the carbohydrate kinase PfkB family. LacC subfamily.</text>
</comment>
<geneLocation type="plasmid">
    <name>pLP712</name>
</geneLocation>
<evidence type="ECO:0000255" key="1">
    <source>
        <dbReference type="HAMAP-Rule" id="MF_01557"/>
    </source>
</evidence>
<evidence type="ECO:0000269" key="2">
    <source>
    </source>
</evidence>
<reference key="1">
    <citation type="journal article" date="1991" name="J. Biol. Chem.">
        <title>Molecular cloning, characterization, and nucleotide sequence of the tagatose 6-phosphate pathway gene cluster of the lactose operon of Lactococcus lactis.</title>
        <authorList>
            <person name="van Rooijen R.J."/>
            <person name="van Schalkwijk S."/>
            <person name="de Vos W.M."/>
        </authorList>
    </citation>
    <scope>NUCLEOTIDE SEQUENCE [GENOMIC DNA]</scope>
    <scope>FUNCTION</scope>
    <scope>OPERON STRUCTURE</scope>
    <scope>INDUCTION</scope>
    <source>
        <strain>MG1820</strain>
    </source>
</reference>
<accession>P23391</accession>
<name>LACC_LACLL</name>
<feature type="chain" id="PRO_0000203915" description="Tagatose-6-phosphate kinase">
    <location>
        <begin position="1"/>
        <end position="310"/>
    </location>
</feature>
<protein>
    <recommendedName>
        <fullName evidence="1">Tagatose-6-phosphate kinase</fullName>
        <ecNumber evidence="1">2.7.1.144</ecNumber>
    </recommendedName>
    <alternativeName>
        <fullName evidence="1">Phosphotagatokinase</fullName>
    </alternativeName>
</protein>
<gene>
    <name evidence="1" type="primary">lacC</name>
</gene>
<organism>
    <name type="scientific">Lactococcus lactis subsp. lactis</name>
    <name type="common">Streptococcus lactis</name>
    <dbReference type="NCBI Taxonomy" id="1360"/>
    <lineage>
        <taxon>Bacteria</taxon>
        <taxon>Bacillati</taxon>
        <taxon>Bacillota</taxon>
        <taxon>Bacilli</taxon>
        <taxon>Lactobacillales</taxon>
        <taxon>Streptococcaceae</taxon>
        <taxon>Lactococcus</taxon>
    </lineage>
</organism>
<proteinExistence type="evidence at transcript level"/>